<protein>
    <recommendedName>
        <fullName evidence="1">Aminomethyltransferase</fullName>
        <ecNumber evidence="1">2.1.2.10</ecNumber>
    </recommendedName>
    <alternativeName>
        <fullName evidence="1">Glycine cleavage system T protein</fullName>
    </alternativeName>
</protein>
<name>GCST_ECO7I</name>
<accession>B7NHW6</accession>
<dbReference type="EC" id="2.1.2.10" evidence="1"/>
<dbReference type="EMBL" id="CU928164">
    <property type="protein sequence ID" value="CAR19438.1"/>
    <property type="molecule type" value="Genomic_DNA"/>
</dbReference>
<dbReference type="RefSeq" id="WP_000068706.1">
    <property type="nucleotide sequence ID" value="NC_011750.1"/>
</dbReference>
<dbReference type="RefSeq" id="YP_002409242.1">
    <property type="nucleotide sequence ID" value="NC_011750.1"/>
</dbReference>
<dbReference type="SMR" id="B7NHW6"/>
<dbReference type="STRING" id="585057.ECIAI39_3320"/>
<dbReference type="GeneID" id="75173005"/>
<dbReference type="KEGG" id="ect:ECIAI39_3320"/>
<dbReference type="PATRIC" id="fig|585057.6.peg.3444"/>
<dbReference type="HOGENOM" id="CLU_007884_10_2_6"/>
<dbReference type="Proteomes" id="UP000000749">
    <property type="component" value="Chromosome"/>
</dbReference>
<dbReference type="GO" id="GO:0005829">
    <property type="term" value="C:cytosol"/>
    <property type="evidence" value="ECO:0007669"/>
    <property type="project" value="TreeGrafter"/>
</dbReference>
<dbReference type="GO" id="GO:0005960">
    <property type="term" value="C:glycine cleavage complex"/>
    <property type="evidence" value="ECO:0007669"/>
    <property type="project" value="InterPro"/>
</dbReference>
<dbReference type="GO" id="GO:0004047">
    <property type="term" value="F:aminomethyltransferase activity"/>
    <property type="evidence" value="ECO:0007669"/>
    <property type="project" value="UniProtKB-UniRule"/>
</dbReference>
<dbReference type="GO" id="GO:0008483">
    <property type="term" value="F:transaminase activity"/>
    <property type="evidence" value="ECO:0007669"/>
    <property type="project" value="UniProtKB-KW"/>
</dbReference>
<dbReference type="GO" id="GO:0019464">
    <property type="term" value="P:glycine decarboxylation via glycine cleavage system"/>
    <property type="evidence" value="ECO:0007669"/>
    <property type="project" value="UniProtKB-UniRule"/>
</dbReference>
<dbReference type="FunFam" id="2.40.30.110:FF:000001">
    <property type="entry name" value="Aminomethyltransferase"/>
    <property type="match status" value="1"/>
</dbReference>
<dbReference type="FunFam" id="3.30.70.1400:FF:000001">
    <property type="entry name" value="Aminomethyltransferase"/>
    <property type="match status" value="1"/>
</dbReference>
<dbReference type="FunFam" id="4.10.1250.10:FF:000001">
    <property type="entry name" value="Aminomethyltransferase"/>
    <property type="match status" value="1"/>
</dbReference>
<dbReference type="Gene3D" id="2.40.30.110">
    <property type="entry name" value="Aminomethyltransferase beta-barrel domains"/>
    <property type="match status" value="1"/>
</dbReference>
<dbReference type="Gene3D" id="3.30.70.1400">
    <property type="entry name" value="Aminomethyltransferase beta-barrel domains"/>
    <property type="match status" value="1"/>
</dbReference>
<dbReference type="Gene3D" id="4.10.1250.10">
    <property type="entry name" value="Aminomethyltransferase fragment"/>
    <property type="match status" value="1"/>
</dbReference>
<dbReference type="Gene3D" id="3.30.1360.120">
    <property type="entry name" value="Probable tRNA modification gtpase trme, domain 1"/>
    <property type="match status" value="1"/>
</dbReference>
<dbReference type="HAMAP" id="MF_00259">
    <property type="entry name" value="GcvT"/>
    <property type="match status" value="1"/>
</dbReference>
<dbReference type="InterPro" id="IPR006223">
    <property type="entry name" value="GCS_T"/>
</dbReference>
<dbReference type="InterPro" id="IPR022903">
    <property type="entry name" value="GCS_T_bac"/>
</dbReference>
<dbReference type="InterPro" id="IPR013977">
    <property type="entry name" value="GCST_C"/>
</dbReference>
<dbReference type="InterPro" id="IPR006222">
    <property type="entry name" value="GCV_T_N"/>
</dbReference>
<dbReference type="InterPro" id="IPR028896">
    <property type="entry name" value="GcvT/YgfZ/DmdA"/>
</dbReference>
<dbReference type="InterPro" id="IPR029043">
    <property type="entry name" value="GcvT/YgfZ_C"/>
</dbReference>
<dbReference type="InterPro" id="IPR027266">
    <property type="entry name" value="TrmE/GcvT_dom1"/>
</dbReference>
<dbReference type="NCBIfam" id="TIGR00528">
    <property type="entry name" value="gcvT"/>
    <property type="match status" value="1"/>
</dbReference>
<dbReference type="NCBIfam" id="NF001567">
    <property type="entry name" value="PRK00389.1"/>
    <property type="match status" value="1"/>
</dbReference>
<dbReference type="PANTHER" id="PTHR43757">
    <property type="entry name" value="AMINOMETHYLTRANSFERASE"/>
    <property type="match status" value="1"/>
</dbReference>
<dbReference type="PANTHER" id="PTHR43757:SF2">
    <property type="entry name" value="AMINOMETHYLTRANSFERASE, MITOCHONDRIAL"/>
    <property type="match status" value="1"/>
</dbReference>
<dbReference type="Pfam" id="PF01571">
    <property type="entry name" value="GCV_T"/>
    <property type="match status" value="1"/>
</dbReference>
<dbReference type="Pfam" id="PF08669">
    <property type="entry name" value="GCV_T_C"/>
    <property type="match status" value="1"/>
</dbReference>
<dbReference type="PIRSF" id="PIRSF006487">
    <property type="entry name" value="GcvT"/>
    <property type="match status" value="1"/>
</dbReference>
<dbReference type="SUPFAM" id="SSF101790">
    <property type="entry name" value="Aminomethyltransferase beta-barrel domain"/>
    <property type="match status" value="1"/>
</dbReference>
<dbReference type="SUPFAM" id="SSF103025">
    <property type="entry name" value="Folate-binding domain"/>
    <property type="match status" value="1"/>
</dbReference>
<gene>
    <name evidence="1" type="primary">gcvT</name>
    <name type="ordered locus">ECIAI39_3320</name>
</gene>
<organism>
    <name type="scientific">Escherichia coli O7:K1 (strain IAI39 / ExPEC)</name>
    <dbReference type="NCBI Taxonomy" id="585057"/>
    <lineage>
        <taxon>Bacteria</taxon>
        <taxon>Pseudomonadati</taxon>
        <taxon>Pseudomonadota</taxon>
        <taxon>Gammaproteobacteria</taxon>
        <taxon>Enterobacterales</taxon>
        <taxon>Enterobacteriaceae</taxon>
        <taxon>Escherichia</taxon>
    </lineage>
</organism>
<proteinExistence type="inferred from homology"/>
<keyword id="KW-0032">Aminotransferase</keyword>
<keyword id="KW-0808">Transferase</keyword>
<evidence type="ECO:0000255" key="1">
    <source>
        <dbReference type="HAMAP-Rule" id="MF_00259"/>
    </source>
</evidence>
<feature type="chain" id="PRO_1000119198" description="Aminomethyltransferase">
    <location>
        <begin position="1"/>
        <end position="364"/>
    </location>
</feature>
<comment type="function">
    <text evidence="1">The glycine cleavage system catalyzes the degradation of glycine.</text>
</comment>
<comment type="catalytic activity">
    <reaction evidence="1">
        <text>N(6)-[(R)-S(8)-aminomethyldihydrolipoyl]-L-lysyl-[protein] + (6S)-5,6,7,8-tetrahydrofolate = N(6)-[(R)-dihydrolipoyl]-L-lysyl-[protein] + (6R)-5,10-methylene-5,6,7,8-tetrahydrofolate + NH4(+)</text>
        <dbReference type="Rhea" id="RHEA:16945"/>
        <dbReference type="Rhea" id="RHEA-COMP:10475"/>
        <dbReference type="Rhea" id="RHEA-COMP:10492"/>
        <dbReference type="ChEBI" id="CHEBI:15636"/>
        <dbReference type="ChEBI" id="CHEBI:28938"/>
        <dbReference type="ChEBI" id="CHEBI:57453"/>
        <dbReference type="ChEBI" id="CHEBI:83100"/>
        <dbReference type="ChEBI" id="CHEBI:83143"/>
        <dbReference type="EC" id="2.1.2.10"/>
    </reaction>
</comment>
<comment type="subunit">
    <text evidence="1">The glycine cleavage system is composed of four proteins: P, T, L and H.</text>
</comment>
<comment type="similarity">
    <text evidence="1">Belongs to the GcvT family.</text>
</comment>
<sequence length="364" mass="40149">MAQQTPLYEQHTLCGARMVDFHGWMMPLHYGSQIDEHHAVRTDAGMFDVSHMTIVDLRGSRTREFLRYLLANDVAKLTKSGKALYSGMLNASGGVIDDLIVYYFTEDFFRLVVNSATREKDLSWITQHAEPFGIEITVRDDLSMIAVQGPNAQAKAATLFNDAQRQAVEGMKPFFGVQAGDLFIATTGYTGEAGYEIALPNEKAADFWRALVEAGVKPCGLGARDTLRLEAGMNLYSQEMDETISPLAANMGWTIAWEPADRDFIGREALEAQREHGTEKLVGLVMTEKGVLRNELPVRFTDAQGNQHEGIITSGTFSPTLGYSIALARVPEGIGETAIVQIRNREMPVKVTKPVFVRNGKAVA</sequence>
<reference key="1">
    <citation type="journal article" date="2009" name="PLoS Genet.">
        <title>Organised genome dynamics in the Escherichia coli species results in highly diverse adaptive paths.</title>
        <authorList>
            <person name="Touchon M."/>
            <person name="Hoede C."/>
            <person name="Tenaillon O."/>
            <person name="Barbe V."/>
            <person name="Baeriswyl S."/>
            <person name="Bidet P."/>
            <person name="Bingen E."/>
            <person name="Bonacorsi S."/>
            <person name="Bouchier C."/>
            <person name="Bouvet O."/>
            <person name="Calteau A."/>
            <person name="Chiapello H."/>
            <person name="Clermont O."/>
            <person name="Cruveiller S."/>
            <person name="Danchin A."/>
            <person name="Diard M."/>
            <person name="Dossat C."/>
            <person name="Karoui M.E."/>
            <person name="Frapy E."/>
            <person name="Garry L."/>
            <person name="Ghigo J.M."/>
            <person name="Gilles A.M."/>
            <person name="Johnson J."/>
            <person name="Le Bouguenec C."/>
            <person name="Lescat M."/>
            <person name="Mangenot S."/>
            <person name="Martinez-Jehanne V."/>
            <person name="Matic I."/>
            <person name="Nassif X."/>
            <person name="Oztas S."/>
            <person name="Petit M.A."/>
            <person name="Pichon C."/>
            <person name="Rouy Z."/>
            <person name="Ruf C.S."/>
            <person name="Schneider D."/>
            <person name="Tourret J."/>
            <person name="Vacherie B."/>
            <person name="Vallenet D."/>
            <person name="Medigue C."/>
            <person name="Rocha E.P.C."/>
            <person name="Denamur E."/>
        </authorList>
    </citation>
    <scope>NUCLEOTIDE SEQUENCE [LARGE SCALE GENOMIC DNA]</scope>
    <source>
        <strain>IAI39 / ExPEC</strain>
    </source>
</reference>